<protein>
    <recommendedName>
        <fullName evidence="1">Small ribosomal subunit protein eS4, Y isoform 1</fullName>
    </recommendedName>
    <alternativeName>
        <fullName>40S ribosomal protein S4, Y isoform 1</fullName>
    </alternativeName>
</protein>
<sequence>MARGPKKHLKRVAAPKHWMLDKLTGVFAPRPSTGPHKLRECLPLIIFLRNRLKYALTGDEVKKICMQRFIKIDGKVRVDVTYPAGFMDVISIEKTGEHFRLVYDTKGRFAVHRITAEEAKYKLCKVRKITVGTKGIPHLVTHDARTIRYPDPVIKVNDTVRIDLGSGKITSFIKFDTGNVCMVIGGANLGRVGVITNRERHPGSFDVVHVKDASGNSFATRISNIFVIGNGNKPWISLPRGKGIRLTIAEERDKRLAAKQSSG</sequence>
<accession>P79183</accession>
<accession>Q9TTK5</accession>
<keyword id="KW-0687">Ribonucleoprotein</keyword>
<keyword id="KW-0689">Ribosomal protein</keyword>
<keyword id="KW-0694">RNA-binding</keyword>
<keyword id="KW-0699">rRNA-binding</keyword>
<proteinExistence type="evidence at transcript level"/>
<organism>
    <name type="scientific">Macaca fuscata fuscata</name>
    <name type="common">Japanese macaque</name>
    <dbReference type="NCBI Taxonomy" id="9543"/>
    <lineage>
        <taxon>Eukaryota</taxon>
        <taxon>Metazoa</taxon>
        <taxon>Chordata</taxon>
        <taxon>Craniata</taxon>
        <taxon>Vertebrata</taxon>
        <taxon>Euteleostomi</taxon>
        <taxon>Mammalia</taxon>
        <taxon>Eutheria</taxon>
        <taxon>Euarchontoglires</taxon>
        <taxon>Primates</taxon>
        <taxon>Haplorrhini</taxon>
        <taxon>Catarrhini</taxon>
        <taxon>Cercopithecidae</taxon>
        <taxon>Cercopithecinae</taxon>
        <taxon>Macaca</taxon>
    </lineage>
</organism>
<reference key="1">
    <citation type="journal article" date="2001" name="Korean J. Genet.">
        <title>Molecular cloning and evolutionary analysis of the ribosomal protein S4 genes in the Japanese monkey.</title>
        <authorList>
            <person name="Kim H.-S."/>
            <person name="Kageyama T."/>
            <person name="Takenaka O."/>
        </authorList>
    </citation>
    <scope>NUCLEOTIDE SEQUENCE [MRNA]</scope>
    <source>
        <tissue>Testis</tissue>
    </source>
</reference>
<reference key="2">
    <citation type="journal article" date="1996" name="Genomics">
        <title>Relationship between the monosomy X phenotype and Y-linked ribosomal protein S4 (Rps4) in several species of mammals: a molecular evolutionary analysis of Rps4 homologs.</title>
        <authorList>
            <person name="Omoe K."/>
            <person name="Endo A."/>
        </authorList>
    </citation>
    <scope>NUCLEOTIDE SEQUENCE [MRNA] OF 49-213</scope>
    <source>
        <tissue>Blood</tissue>
    </source>
</reference>
<evidence type="ECO:0000305" key="1"/>
<feature type="chain" id="PRO_0000130813" description="Small ribosomal subunit protein eS4, Y isoform 1">
    <location>
        <begin position="1"/>
        <end position="263"/>
    </location>
</feature>
<feature type="domain" description="S4 RNA-binding">
    <location>
        <begin position="42"/>
        <end position="104"/>
    </location>
</feature>
<feature type="sequence conflict" description="In Ref. 2; BAA21076." evidence="1" ref="2">
    <original>A</original>
    <variation>V</variation>
    <location>
        <position position="116"/>
    </location>
</feature>
<feature type="sequence conflict" description="In Ref. 2; BAA21076." evidence="1" ref="2">
    <original>VGT</original>
    <variation>MGM</variation>
    <location>
        <begin position="131"/>
        <end position="133"/>
    </location>
</feature>
<feature type="sequence conflict" description="In Ref. 2; BAA21076." evidence="1" ref="2">
    <original>V</original>
    <variation>L</variation>
    <location>
        <position position="153"/>
    </location>
</feature>
<feature type="sequence conflict" description="In Ref. 2; BAA21076." evidence="1" ref="2">
    <original>R</original>
    <variation>Q</variation>
    <location>
        <position position="161"/>
    </location>
</feature>
<feature type="sequence conflict" description="In Ref. 2; BAA21076." evidence="1" ref="2">
    <original>S</original>
    <variation>T</variation>
    <location>
        <position position="166"/>
    </location>
</feature>
<feature type="sequence conflict" description="In Ref. 2; BAA21076." evidence="1" ref="2">
    <original>TS</original>
    <variation>IN</variation>
    <location>
        <begin position="170"/>
        <end position="171"/>
    </location>
</feature>
<feature type="sequence conflict" description="In Ref. 2; BAA21076." evidence="1" ref="2">
    <original>D</original>
    <variation>E</variation>
    <location>
        <position position="176"/>
    </location>
</feature>
<name>RS4Y1_MACFU</name>
<comment type="similarity">
    <text evidence="1">Belongs to the eukaryotic ribosomal protein eS4 family.</text>
</comment>
<gene>
    <name type="primary">RPS4Y1</name>
    <name type="synonym">RPS4Y</name>
</gene>
<dbReference type="EMBL" id="AB024286">
    <property type="protein sequence ID" value="BAA87933.1"/>
    <property type="molecule type" value="mRNA"/>
</dbReference>
<dbReference type="EMBL" id="D50105">
    <property type="protein sequence ID" value="BAA21076.1"/>
    <property type="molecule type" value="mRNA"/>
</dbReference>
<dbReference type="SMR" id="P79183"/>
<dbReference type="GO" id="GO:0022627">
    <property type="term" value="C:cytosolic small ribosomal subunit"/>
    <property type="evidence" value="ECO:0007669"/>
    <property type="project" value="TreeGrafter"/>
</dbReference>
<dbReference type="GO" id="GO:0019843">
    <property type="term" value="F:rRNA binding"/>
    <property type="evidence" value="ECO:0007669"/>
    <property type="project" value="UniProtKB-KW"/>
</dbReference>
<dbReference type="GO" id="GO:0003735">
    <property type="term" value="F:structural constituent of ribosome"/>
    <property type="evidence" value="ECO:0007669"/>
    <property type="project" value="InterPro"/>
</dbReference>
<dbReference type="GO" id="GO:0006412">
    <property type="term" value="P:translation"/>
    <property type="evidence" value="ECO:0007669"/>
    <property type="project" value="InterPro"/>
</dbReference>
<dbReference type="CDD" id="cd06087">
    <property type="entry name" value="KOW_RPS4"/>
    <property type="match status" value="1"/>
</dbReference>
<dbReference type="CDD" id="cd00165">
    <property type="entry name" value="S4"/>
    <property type="match status" value="1"/>
</dbReference>
<dbReference type="FunFam" id="2.30.30.30:FF:000005">
    <property type="entry name" value="40S ribosomal protein S4"/>
    <property type="match status" value="1"/>
</dbReference>
<dbReference type="FunFam" id="2.40.50.740:FF:000001">
    <property type="entry name" value="40S ribosomal protein S4"/>
    <property type="match status" value="1"/>
</dbReference>
<dbReference type="FunFam" id="3.10.290.10:FF:000051">
    <property type="entry name" value="40S ribosomal protein S4, X isoform"/>
    <property type="match status" value="1"/>
</dbReference>
<dbReference type="Gene3D" id="2.30.30.30">
    <property type="match status" value="1"/>
</dbReference>
<dbReference type="Gene3D" id="2.40.50.740">
    <property type="match status" value="1"/>
</dbReference>
<dbReference type="Gene3D" id="3.10.290.10">
    <property type="entry name" value="RNA-binding S4 domain"/>
    <property type="match status" value="1"/>
</dbReference>
<dbReference type="HAMAP" id="MF_00485">
    <property type="entry name" value="Ribosomal_eS4"/>
    <property type="match status" value="1"/>
</dbReference>
<dbReference type="InterPro" id="IPR005824">
    <property type="entry name" value="KOW"/>
</dbReference>
<dbReference type="InterPro" id="IPR014722">
    <property type="entry name" value="Rib_uL2_dom2"/>
</dbReference>
<dbReference type="InterPro" id="IPR000876">
    <property type="entry name" value="Ribosomal_eS4"/>
</dbReference>
<dbReference type="InterPro" id="IPR032277">
    <property type="entry name" value="Ribosomal_eS4_C"/>
</dbReference>
<dbReference type="InterPro" id="IPR013845">
    <property type="entry name" value="Ribosomal_eS4_central_region"/>
</dbReference>
<dbReference type="InterPro" id="IPR038237">
    <property type="entry name" value="Ribosomal_eS4_central_sf"/>
</dbReference>
<dbReference type="InterPro" id="IPR041982">
    <property type="entry name" value="Ribosomal_eS4_KOW"/>
</dbReference>
<dbReference type="InterPro" id="IPR013843">
    <property type="entry name" value="Ribosomal_eS4_N"/>
</dbReference>
<dbReference type="InterPro" id="IPR018199">
    <property type="entry name" value="Ribosomal_eS4_N_CS"/>
</dbReference>
<dbReference type="InterPro" id="IPR002942">
    <property type="entry name" value="S4_RNA-bd"/>
</dbReference>
<dbReference type="InterPro" id="IPR036986">
    <property type="entry name" value="S4_RNA-bd_sf"/>
</dbReference>
<dbReference type="PANTHER" id="PTHR11581">
    <property type="entry name" value="30S/40S RIBOSOMAL PROTEIN S4"/>
    <property type="match status" value="1"/>
</dbReference>
<dbReference type="PANTHER" id="PTHR11581:SF7">
    <property type="entry name" value="SMALL RIBOSOMAL SUBUNIT PROTEIN ES4, Y ISOFORM 2"/>
    <property type="match status" value="1"/>
</dbReference>
<dbReference type="Pfam" id="PF16121">
    <property type="entry name" value="40S_S4_C"/>
    <property type="match status" value="1"/>
</dbReference>
<dbReference type="Pfam" id="PF00467">
    <property type="entry name" value="KOW"/>
    <property type="match status" value="1"/>
</dbReference>
<dbReference type="Pfam" id="PF00900">
    <property type="entry name" value="Ribosomal_S4e"/>
    <property type="match status" value="1"/>
</dbReference>
<dbReference type="Pfam" id="PF08071">
    <property type="entry name" value="RS4NT"/>
    <property type="match status" value="1"/>
</dbReference>
<dbReference type="PIRSF" id="PIRSF002116">
    <property type="entry name" value="Ribosomal_S4"/>
    <property type="match status" value="1"/>
</dbReference>
<dbReference type="SMART" id="SM00363">
    <property type="entry name" value="S4"/>
    <property type="match status" value="1"/>
</dbReference>
<dbReference type="PROSITE" id="PS00528">
    <property type="entry name" value="RIBOSOMAL_S4E"/>
    <property type="match status" value="1"/>
</dbReference>
<dbReference type="PROSITE" id="PS50889">
    <property type="entry name" value="S4"/>
    <property type="match status" value="1"/>
</dbReference>